<accession>P9WQD1</accession>
<accession>L0TGD8</accession>
<accession>O69635</accession>
<feature type="initiator methionine" description="Removed" evidence="5">
    <location>
        <position position="1"/>
    </location>
</feature>
<feature type="chain" id="PRO_0000208369" description="Acetyl-coenzyme A synthetase">
    <location>
        <begin position="2"/>
        <end position="651"/>
    </location>
</feature>
<feature type="binding site" evidence="1">
    <location>
        <begin position="190"/>
        <end position="193"/>
    </location>
    <ligand>
        <name>CoA</name>
        <dbReference type="ChEBI" id="CHEBI:57287"/>
    </ligand>
</feature>
<feature type="binding site" evidence="1">
    <location>
        <position position="311"/>
    </location>
    <ligand>
        <name>CoA</name>
        <dbReference type="ChEBI" id="CHEBI:57287"/>
    </ligand>
</feature>
<feature type="binding site" evidence="1">
    <location>
        <begin position="387"/>
        <end position="389"/>
    </location>
    <ligand>
        <name>ATP</name>
        <dbReference type="ChEBI" id="CHEBI:30616"/>
    </ligand>
</feature>
<feature type="binding site" evidence="1">
    <location>
        <begin position="411"/>
        <end position="416"/>
    </location>
    <ligand>
        <name>ATP</name>
        <dbReference type="ChEBI" id="CHEBI:30616"/>
    </ligand>
</feature>
<feature type="binding site" evidence="1">
    <location>
        <position position="508"/>
    </location>
    <ligand>
        <name>ATP</name>
        <dbReference type="ChEBI" id="CHEBI:30616"/>
    </ligand>
</feature>
<feature type="binding site" evidence="1">
    <location>
        <position position="523"/>
    </location>
    <ligand>
        <name>ATP</name>
        <dbReference type="ChEBI" id="CHEBI:30616"/>
    </ligand>
</feature>
<feature type="binding site" evidence="1">
    <location>
        <position position="531"/>
    </location>
    <ligand>
        <name>CoA</name>
        <dbReference type="ChEBI" id="CHEBI:57287"/>
    </ligand>
</feature>
<feature type="binding site" evidence="1">
    <location>
        <position position="534"/>
    </location>
    <ligand>
        <name>ATP</name>
        <dbReference type="ChEBI" id="CHEBI:30616"/>
    </ligand>
</feature>
<feature type="binding site" evidence="1">
    <location>
        <position position="545"/>
    </location>
    <ligand>
        <name>Mg(2+)</name>
        <dbReference type="ChEBI" id="CHEBI:18420"/>
    </ligand>
</feature>
<feature type="binding site" evidence="1">
    <location>
        <position position="547"/>
    </location>
    <ligand>
        <name>Mg(2+)</name>
        <dbReference type="ChEBI" id="CHEBI:18420"/>
    </ligand>
</feature>
<feature type="binding site" evidence="1">
    <location>
        <position position="550"/>
    </location>
    <ligand>
        <name>Mg(2+)</name>
        <dbReference type="ChEBI" id="CHEBI:18420"/>
    </ligand>
</feature>
<feature type="modified residue" description="N-acetylserine" evidence="5">
    <location>
        <position position="2"/>
    </location>
</feature>
<feature type="modified residue" description="N6-acetyllysine" evidence="1 2">
    <location>
        <position position="617"/>
    </location>
</feature>
<feature type="mutagenesis site" description="Complete loss of acetyl-coenzyme A synthetase activity." evidence="2 3">
    <original>K</original>
    <variation>R</variation>
    <location>
        <position position="617"/>
    </location>
</feature>
<proteinExistence type="evidence at protein level"/>
<sequence>MSESTPEVSSSYPPPAHFAEHANARAELYREAEEDRLAFWAKQANRLSWTTPFTEVLDWSGAPFAKWFVGGELNVAYNCVDRHVEAGHGDRVAIHWEGEPVGDRRTLTYSDLLAEVSKAANALTDLGLVAGDRVAIYLPLIPEAVIAMLACARLGIMHSVVFGGFTAAALQARIVDAQAKLLITADGQFRRGKPSPLKAAADEALAAIPDCSVEHVLVVRRTGIEMAWSEGRDLWWHHVVGSASPAHTPEPFDSEHPLFLLYTSGTTGKPKGIMHTSGGYLTQCCYTMRTIFDVKPDSDVFWCTADIGWVTGHTYGVYGPLCNGVTEVLYEGTPDTPDRHRHFQIIEKYGVTIYYTAPTLIRMFMKWGREIPDSHDLSSLRLLGSVGEPINPEAWRWYRDVIGGGRTPLVDTWWQTETGSAMISPLPGIAAAKPGSAMTPLPGISAKIVDDHGDPLPPHTEGAQHVTGYLVLDQPWPSMLRGIWGDPARYWHSYWSKFSDKGYYFAGDGARIDPDGAIWVLGRIDDVMNVSGHRISTAEVESALVAHSGVAEAAVVGVTDETTTQAICAFVVLRANYAPHDRTAEELRTEVARVISPIARPRDVHVVPELPKTRSGKIMRRLLRDVAENRELGDTSTLLDPTVFDAIRAAK</sequence>
<protein>
    <recommendedName>
        <fullName evidence="1">Acetyl-coenzyme A synthetase</fullName>
        <shortName evidence="1">AcCoA synthetase</shortName>
        <shortName evidence="1">Acs</shortName>
        <ecNumber evidence="1">6.2.1.1</ecNumber>
    </recommendedName>
    <alternativeName>
        <fullName evidence="1">Acetate--CoA ligase</fullName>
    </alternativeName>
    <alternativeName>
        <fullName evidence="1">Acyl-activating enzyme</fullName>
    </alternativeName>
</protein>
<comment type="function">
    <text evidence="1 2 3">Catalyzes the conversion of acetate into acetyl-CoA (AcCoA), an essential intermediate at the junction of anabolic and catabolic pathways. AcsA undergoes a two-step reaction. In the first half reaction, AcsA combines acetate with ATP to form acetyl-adenylate (AcAMP) intermediate. In the second half reaction, it can then transfer the acetyl group from AcAMP to the sulfhydryl group of CoA, forming the product AcCoA. M.tuberculosis may use AcsA for both acetate and propionate assimilation.</text>
</comment>
<comment type="catalytic activity">
    <reaction evidence="1">
        <text>acetate + ATP + CoA = acetyl-CoA + AMP + diphosphate</text>
        <dbReference type="Rhea" id="RHEA:23176"/>
        <dbReference type="ChEBI" id="CHEBI:30089"/>
        <dbReference type="ChEBI" id="CHEBI:30616"/>
        <dbReference type="ChEBI" id="CHEBI:33019"/>
        <dbReference type="ChEBI" id="CHEBI:57287"/>
        <dbReference type="ChEBI" id="CHEBI:57288"/>
        <dbReference type="ChEBI" id="CHEBI:456215"/>
        <dbReference type="EC" id="6.2.1.1"/>
    </reaction>
</comment>
<comment type="cofactor">
    <cofactor evidence="1 3">
        <name>Mg(2+)</name>
        <dbReference type="ChEBI" id="CHEBI:18420"/>
    </cofactor>
    <cofactor evidence="1 3">
        <name>Ca(2+)</name>
        <dbReference type="ChEBI" id="CHEBI:29108"/>
    </cofactor>
    <cofactor evidence="1 3">
        <name>Mn(2+)</name>
        <dbReference type="ChEBI" id="CHEBI:29035"/>
    </cofactor>
    <cofactor evidence="1 3">
        <name>Ni(2+)</name>
        <dbReference type="ChEBI" id="CHEBI:49786"/>
    </cofactor>
    <cofactor evidence="1 3">
        <name>Zn(2+)</name>
        <dbReference type="ChEBI" id="CHEBI:29105"/>
    </cofactor>
    <text evidence="1 3">Magnesium, but can also use calcium, manganese, nickel or zinc ions.</text>
</comment>
<comment type="biophysicochemical properties">
    <kinetics>
        <KM evidence="3">0.35 mM for CoA (at pH 8 and at 37 degrees Celsius)</KM>
        <KM evidence="3">1.2 mM for acetate (at pH 8 and at 37 degrees Celsius)</KM>
        <KM evidence="3">2.1 mM for propionate (at pH 8 and at 37 degrees Celsius)</KM>
        <KM evidence="3">5.6 mM for ATP (at pH 8 and at 37 degrees Celsius)</KM>
        <KM evidence="3">509 mM for butyrate (at pH 8 and at 37 degrees Celsius)</KM>
    </kinetics>
    <phDependence>
        <text evidence="3">Optimum pH is around 8. The enzyme is stable under neutral and alkaline conditions, while its activity decreases rapidly below pH 6.0.</text>
    </phDependence>
    <temperatureDependence>
        <text evidence="3">Optimum temperature is 37 degrees Celsius. It lost its activity rapidly below 25 degrees Celsius or above 45 degrees Celsius.</text>
    </temperatureDependence>
</comment>
<comment type="PTM">
    <text evidence="2">Acetylated on Lys-617 by Pat in the presence of acetyl-CoA as an acetyl donor and ATP. Acetylation results in the inactivation of the enzyme. Deacetylation by the SIR2-homolog deacetylase CobB is required to activate the enzyme.</text>
</comment>
<comment type="miscellaneous">
    <text evidence="4">Could be also autoacetylated on Lys-617 in the presence of acetate as an acetyl donor and ATP. Autoacetylation is effectively inhibited by CoA. If CoA is not available or the concentration of CoA is low in vivo, the enzyme can transfer acetyl group from AcAMP to itself, resulting in autoacetylation and inactivation. When CoA is available, the acetyl group is donated to CoA forming AcCoA (PubMed:21896569).</text>
</comment>
<comment type="similarity">
    <text evidence="1">Belongs to the ATP-dependent AMP-binding enzyme family.</text>
</comment>
<name>ACSA_MYCTU</name>
<evidence type="ECO:0000255" key="1">
    <source>
        <dbReference type="HAMAP-Rule" id="MF_01123"/>
    </source>
</evidence>
<evidence type="ECO:0000269" key="2">
    <source>
    </source>
</evidence>
<evidence type="ECO:0000269" key="3">
    <source>
    </source>
</evidence>
<evidence type="ECO:0000305" key="4">
    <source>
    </source>
</evidence>
<evidence type="ECO:0007744" key="5">
    <source>
    </source>
</evidence>
<gene>
    <name evidence="1" type="primary">acsA</name>
    <name type="synonym">acs</name>
    <name type="ordered locus">Rv3667</name>
    <name type="ORF">MTV025.015</name>
</gene>
<reference key="1">
    <citation type="journal article" date="1998" name="Nature">
        <title>Deciphering the biology of Mycobacterium tuberculosis from the complete genome sequence.</title>
        <authorList>
            <person name="Cole S.T."/>
            <person name="Brosch R."/>
            <person name="Parkhill J."/>
            <person name="Garnier T."/>
            <person name="Churcher C.M."/>
            <person name="Harris D.E."/>
            <person name="Gordon S.V."/>
            <person name="Eiglmeier K."/>
            <person name="Gas S."/>
            <person name="Barry C.E. III"/>
            <person name="Tekaia F."/>
            <person name="Badcock K."/>
            <person name="Basham D."/>
            <person name="Brown D."/>
            <person name="Chillingworth T."/>
            <person name="Connor R."/>
            <person name="Davies R.M."/>
            <person name="Devlin K."/>
            <person name="Feltwell T."/>
            <person name="Gentles S."/>
            <person name="Hamlin N."/>
            <person name="Holroyd S."/>
            <person name="Hornsby T."/>
            <person name="Jagels K."/>
            <person name="Krogh A."/>
            <person name="McLean J."/>
            <person name="Moule S."/>
            <person name="Murphy L.D."/>
            <person name="Oliver S."/>
            <person name="Osborne J."/>
            <person name="Quail M.A."/>
            <person name="Rajandream M.A."/>
            <person name="Rogers J."/>
            <person name="Rutter S."/>
            <person name="Seeger K."/>
            <person name="Skelton S."/>
            <person name="Squares S."/>
            <person name="Squares R."/>
            <person name="Sulston J.E."/>
            <person name="Taylor K."/>
            <person name="Whitehead S."/>
            <person name="Barrell B.G."/>
        </authorList>
    </citation>
    <scope>NUCLEOTIDE SEQUENCE [LARGE SCALE GENOMIC DNA]</scope>
    <source>
        <strain>ATCC 25618 / H37Rv</strain>
    </source>
</reference>
<reference key="2">
    <citation type="journal article" date="2011" name="Acta Biochim. Biophys. Sin.">
        <title>Purification and characterization of the acetyl-CoA synthetase from Mycobacterium tuberculosis.</title>
        <authorList>
            <person name="Li R."/>
            <person name="Gu J."/>
            <person name="Chen P."/>
            <person name="Zhang Z."/>
            <person name="Deng J."/>
            <person name="Zhang X."/>
        </authorList>
    </citation>
    <scope>FUNCTION</scope>
    <scope>AUTOACETYLATION AT LYS-617</scope>
    <scope>MUTAGENESIS OF LYS-617</scope>
    <scope>BIOPHYSICOCHEMICAL PROPERTIES</scope>
    <scope>COFACTOR</scope>
</reference>
<reference key="3">
    <citation type="journal article" date="2011" name="Biochemistry">
        <title>Reversible acetylation and inactivation of Mycobacterium tuberculosis acetyl-CoA synthetase is dependent on cAMP.</title>
        <authorList>
            <person name="Xu H."/>
            <person name="Hegde S.S."/>
            <person name="Blanchard J.S."/>
        </authorList>
    </citation>
    <scope>FUNCTION</scope>
    <scope>ACETYLATION AT LYS-617</scope>
    <scope>MUTAGENESIS OF LYS-617</scope>
</reference>
<reference key="4">
    <citation type="journal article" date="2011" name="Mol. Cell. Proteomics">
        <title>Proteogenomic analysis of Mycobacterium tuberculosis by high resolution mass spectrometry.</title>
        <authorList>
            <person name="Kelkar D.S."/>
            <person name="Kumar D."/>
            <person name="Kumar P."/>
            <person name="Balakrishnan L."/>
            <person name="Muthusamy B."/>
            <person name="Yadav A.K."/>
            <person name="Shrivastava P."/>
            <person name="Marimuthu A."/>
            <person name="Anand S."/>
            <person name="Sundaram H."/>
            <person name="Kingsbury R."/>
            <person name="Harsha H.C."/>
            <person name="Nair B."/>
            <person name="Prasad T.S."/>
            <person name="Chauhan D.S."/>
            <person name="Katoch K."/>
            <person name="Katoch V.M."/>
            <person name="Kumar P."/>
            <person name="Chaerkady R."/>
            <person name="Ramachandran S."/>
            <person name="Dash D."/>
            <person name="Pandey A."/>
        </authorList>
    </citation>
    <scope>ACETYLATION [LARGE SCALE ANALYSIS] AT SER-2</scope>
    <scope>CLEAVAGE OF INITIATOR METHIONINE [LARGE SCALE ANALYSIS]</scope>
    <scope>IDENTIFICATION BY MASS SPECTROMETRY [LARGE SCALE ANALYSIS]</scope>
    <source>
        <strain>ATCC 25618 / H37Rv</strain>
    </source>
</reference>
<organism>
    <name type="scientific">Mycobacterium tuberculosis (strain ATCC 25618 / H37Rv)</name>
    <dbReference type="NCBI Taxonomy" id="83332"/>
    <lineage>
        <taxon>Bacteria</taxon>
        <taxon>Bacillati</taxon>
        <taxon>Actinomycetota</taxon>
        <taxon>Actinomycetes</taxon>
        <taxon>Mycobacteriales</taxon>
        <taxon>Mycobacteriaceae</taxon>
        <taxon>Mycobacterium</taxon>
        <taxon>Mycobacterium tuberculosis complex</taxon>
    </lineage>
</organism>
<keyword id="KW-0007">Acetylation</keyword>
<keyword id="KW-0067">ATP-binding</keyword>
<keyword id="KW-0436">Ligase</keyword>
<keyword id="KW-0460">Magnesium</keyword>
<keyword id="KW-0479">Metal-binding</keyword>
<keyword id="KW-0547">Nucleotide-binding</keyword>
<keyword id="KW-1185">Reference proteome</keyword>
<dbReference type="EC" id="6.2.1.1" evidence="1"/>
<dbReference type="EMBL" id="AL123456">
    <property type="protein sequence ID" value="CCP46490.1"/>
    <property type="molecule type" value="Genomic_DNA"/>
</dbReference>
<dbReference type="PIR" id="D70789">
    <property type="entry name" value="D70789"/>
</dbReference>
<dbReference type="RefSeq" id="NP_218184.1">
    <property type="nucleotide sequence ID" value="NC_000962.3"/>
</dbReference>
<dbReference type="RefSeq" id="WP_003899631.1">
    <property type="nucleotide sequence ID" value="NZ_NVQJ01000028.1"/>
</dbReference>
<dbReference type="SMR" id="P9WQD1"/>
<dbReference type="FunCoup" id="P9WQD1">
    <property type="interactions" value="493"/>
</dbReference>
<dbReference type="STRING" id="83332.Rv3667"/>
<dbReference type="iPTMnet" id="P9WQD1"/>
<dbReference type="PaxDb" id="83332-Rv3667"/>
<dbReference type="DNASU" id="885479"/>
<dbReference type="GeneID" id="885479"/>
<dbReference type="KEGG" id="mtu:Rv3667"/>
<dbReference type="KEGG" id="mtv:RVBD_3667"/>
<dbReference type="TubercuList" id="Rv3667"/>
<dbReference type="eggNOG" id="COG0365">
    <property type="taxonomic scope" value="Bacteria"/>
</dbReference>
<dbReference type="InParanoid" id="P9WQD1"/>
<dbReference type="OrthoDB" id="9803968at2"/>
<dbReference type="PhylomeDB" id="P9WQD1"/>
<dbReference type="SABIO-RK" id="P9WQD1"/>
<dbReference type="Proteomes" id="UP000001584">
    <property type="component" value="Chromosome"/>
</dbReference>
<dbReference type="GO" id="GO:0005829">
    <property type="term" value="C:cytosol"/>
    <property type="evidence" value="ECO:0000318"/>
    <property type="project" value="GO_Central"/>
</dbReference>
<dbReference type="GO" id="GO:0009274">
    <property type="term" value="C:peptidoglycan-based cell wall"/>
    <property type="evidence" value="ECO:0007005"/>
    <property type="project" value="MTBBASE"/>
</dbReference>
<dbReference type="GO" id="GO:0005886">
    <property type="term" value="C:plasma membrane"/>
    <property type="evidence" value="ECO:0007005"/>
    <property type="project" value="MTBBASE"/>
</dbReference>
<dbReference type="GO" id="GO:0003987">
    <property type="term" value="F:acetate-CoA ligase activity"/>
    <property type="evidence" value="ECO:0000318"/>
    <property type="project" value="GO_Central"/>
</dbReference>
<dbReference type="GO" id="GO:0016208">
    <property type="term" value="F:AMP binding"/>
    <property type="evidence" value="ECO:0007669"/>
    <property type="project" value="InterPro"/>
</dbReference>
<dbReference type="GO" id="GO:0005524">
    <property type="term" value="F:ATP binding"/>
    <property type="evidence" value="ECO:0007669"/>
    <property type="project" value="UniProtKB-KW"/>
</dbReference>
<dbReference type="GO" id="GO:0046872">
    <property type="term" value="F:metal ion binding"/>
    <property type="evidence" value="ECO:0007669"/>
    <property type="project" value="UniProtKB-KW"/>
</dbReference>
<dbReference type="GO" id="GO:0006085">
    <property type="term" value="P:acetyl-CoA biosynthetic process"/>
    <property type="evidence" value="ECO:0000318"/>
    <property type="project" value="GO_Central"/>
</dbReference>
<dbReference type="GO" id="GO:0019427">
    <property type="term" value="P:acetyl-CoA biosynthetic process from acetate"/>
    <property type="evidence" value="ECO:0007669"/>
    <property type="project" value="InterPro"/>
</dbReference>
<dbReference type="CDD" id="cd05966">
    <property type="entry name" value="ACS"/>
    <property type="match status" value="1"/>
</dbReference>
<dbReference type="FunFam" id="3.30.300.30:FF:000047">
    <property type="entry name" value="Acetyl-coenzyme A synthetase"/>
    <property type="match status" value="1"/>
</dbReference>
<dbReference type="FunFam" id="3.40.50.12780:FF:000001">
    <property type="entry name" value="Acetyl-coenzyme A synthetase"/>
    <property type="match status" value="1"/>
</dbReference>
<dbReference type="Gene3D" id="3.30.300.30">
    <property type="match status" value="1"/>
</dbReference>
<dbReference type="Gene3D" id="3.40.50.12780">
    <property type="entry name" value="N-terminal domain of ligase-like"/>
    <property type="match status" value="1"/>
</dbReference>
<dbReference type="HAMAP" id="MF_01123">
    <property type="entry name" value="Ac_CoA_synth"/>
    <property type="match status" value="1"/>
</dbReference>
<dbReference type="InterPro" id="IPR011904">
    <property type="entry name" value="Ac_CoA_lig"/>
</dbReference>
<dbReference type="InterPro" id="IPR032387">
    <property type="entry name" value="ACAS_N"/>
</dbReference>
<dbReference type="InterPro" id="IPR025110">
    <property type="entry name" value="AMP-bd_C"/>
</dbReference>
<dbReference type="InterPro" id="IPR045851">
    <property type="entry name" value="AMP-bd_C_sf"/>
</dbReference>
<dbReference type="InterPro" id="IPR020845">
    <property type="entry name" value="AMP-binding_CS"/>
</dbReference>
<dbReference type="InterPro" id="IPR000873">
    <property type="entry name" value="AMP-dep_synth/lig_dom"/>
</dbReference>
<dbReference type="InterPro" id="IPR042099">
    <property type="entry name" value="ANL_N_sf"/>
</dbReference>
<dbReference type="NCBIfam" id="TIGR02188">
    <property type="entry name" value="Ac_CoA_lig_AcsA"/>
    <property type="match status" value="1"/>
</dbReference>
<dbReference type="NCBIfam" id="NF001208">
    <property type="entry name" value="PRK00174.1"/>
    <property type="match status" value="1"/>
</dbReference>
<dbReference type="PANTHER" id="PTHR24095">
    <property type="entry name" value="ACETYL-COENZYME A SYNTHETASE"/>
    <property type="match status" value="1"/>
</dbReference>
<dbReference type="PANTHER" id="PTHR24095:SF14">
    <property type="entry name" value="ACETYL-COENZYME A SYNTHETASE 1"/>
    <property type="match status" value="1"/>
</dbReference>
<dbReference type="Pfam" id="PF16177">
    <property type="entry name" value="ACAS_N"/>
    <property type="match status" value="1"/>
</dbReference>
<dbReference type="Pfam" id="PF00501">
    <property type="entry name" value="AMP-binding"/>
    <property type="match status" value="1"/>
</dbReference>
<dbReference type="Pfam" id="PF13193">
    <property type="entry name" value="AMP-binding_C"/>
    <property type="match status" value="1"/>
</dbReference>
<dbReference type="SUPFAM" id="SSF56801">
    <property type="entry name" value="Acetyl-CoA synthetase-like"/>
    <property type="match status" value="1"/>
</dbReference>
<dbReference type="PROSITE" id="PS00455">
    <property type="entry name" value="AMP_BINDING"/>
    <property type="match status" value="1"/>
</dbReference>